<organism>
    <name type="scientific">Cyanidioschyzon merolae (strain NIES-3377 / 10D)</name>
    <name type="common">Unicellular red alga</name>
    <dbReference type="NCBI Taxonomy" id="280699"/>
    <lineage>
        <taxon>Eukaryota</taxon>
        <taxon>Rhodophyta</taxon>
        <taxon>Bangiophyceae</taxon>
        <taxon>Cyanidiales</taxon>
        <taxon>Cyanidiaceae</taxon>
        <taxon>Cyanidioschyzon</taxon>
    </lineage>
</organism>
<accession>Q85G29</accession>
<dbReference type="EMBL" id="AB002583">
    <property type="protein sequence ID" value="BAC76162.1"/>
    <property type="molecule type" value="Genomic_DNA"/>
</dbReference>
<dbReference type="RefSeq" id="NP_849000.1">
    <property type="nucleotide sequence ID" value="NC_004799.1"/>
</dbReference>
<dbReference type="SMR" id="Q85G29"/>
<dbReference type="STRING" id="280699.Q85G29"/>
<dbReference type="EnsemblPlants" id="CMV079CT">
    <property type="protein sequence ID" value="CMV079CT"/>
    <property type="gene ID" value="CMV079C"/>
</dbReference>
<dbReference type="GeneID" id="845013"/>
<dbReference type="Gramene" id="CMV079CT">
    <property type="protein sequence ID" value="CMV079CT"/>
    <property type="gene ID" value="CMV079C"/>
</dbReference>
<dbReference type="KEGG" id="cme:CymeCp068"/>
<dbReference type="HOGENOM" id="CLU_113441_5_2_1"/>
<dbReference type="Proteomes" id="UP000007014">
    <property type="component" value="Chloroplast"/>
</dbReference>
<dbReference type="GO" id="GO:0009507">
    <property type="term" value="C:chloroplast"/>
    <property type="evidence" value="ECO:0007669"/>
    <property type="project" value="UniProtKB-SubCell"/>
</dbReference>
<dbReference type="GO" id="GO:1990904">
    <property type="term" value="C:ribonucleoprotein complex"/>
    <property type="evidence" value="ECO:0007669"/>
    <property type="project" value="UniProtKB-KW"/>
</dbReference>
<dbReference type="GO" id="GO:0005840">
    <property type="term" value="C:ribosome"/>
    <property type="evidence" value="ECO:0007669"/>
    <property type="project" value="UniProtKB-KW"/>
</dbReference>
<dbReference type="GO" id="GO:0070181">
    <property type="term" value="F:small ribosomal subunit rRNA binding"/>
    <property type="evidence" value="ECO:0007669"/>
    <property type="project" value="TreeGrafter"/>
</dbReference>
<dbReference type="GO" id="GO:0003735">
    <property type="term" value="F:structural constituent of ribosome"/>
    <property type="evidence" value="ECO:0007669"/>
    <property type="project" value="InterPro"/>
</dbReference>
<dbReference type="GO" id="GO:0006412">
    <property type="term" value="P:translation"/>
    <property type="evidence" value="ECO:0007669"/>
    <property type="project" value="UniProtKB-UniRule"/>
</dbReference>
<dbReference type="CDD" id="cd00473">
    <property type="entry name" value="bS6"/>
    <property type="match status" value="1"/>
</dbReference>
<dbReference type="Gene3D" id="3.30.70.60">
    <property type="match status" value="1"/>
</dbReference>
<dbReference type="HAMAP" id="MF_00360">
    <property type="entry name" value="Ribosomal_bS6"/>
    <property type="match status" value="1"/>
</dbReference>
<dbReference type="InterPro" id="IPR000529">
    <property type="entry name" value="Ribosomal_bS6"/>
</dbReference>
<dbReference type="InterPro" id="IPR035980">
    <property type="entry name" value="Ribosomal_bS6_sf"/>
</dbReference>
<dbReference type="InterPro" id="IPR020814">
    <property type="entry name" value="Ribosomal_S6_plastid/chlpt"/>
</dbReference>
<dbReference type="InterPro" id="IPR014717">
    <property type="entry name" value="Transl_elong_EF1B/ribsomal_bS6"/>
</dbReference>
<dbReference type="NCBIfam" id="TIGR00166">
    <property type="entry name" value="S6"/>
    <property type="match status" value="1"/>
</dbReference>
<dbReference type="PANTHER" id="PTHR21011">
    <property type="entry name" value="MITOCHONDRIAL 28S RIBOSOMAL PROTEIN S6"/>
    <property type="match status" value="1"/>
</dbReference>
<dbReference type="PANTHER" id="PTHR21011:SF1">
    <property type="entry name" value="SMALL RIBOSOMAL SUBUNIT PROTEIN BS6M"/>
    <property type="match status" value="1"/>
</dbReference>
<dbReference type="Pfam" id="PF01250">
    <property type="entry name" value="Ribosomal_S6"/>
    <property type="match status" value="1"/>
</dbReference>
<dbReference type="SUPFAM" id="SSF54995">
    <property type="entry name" value="Ribosomal protein S6"/>
    <property type="match status" value="1"/>
</dbReference>
<proteinExistence type="inferred from homology"/>
<protein>
    <recommendedName>
        <fullName evidence="1">Small ribosomal subunit protein bS6c</fullName>
    </recommendedName>
    <alternativeName>
        <fullName evidence="2">30S ribosomal protein S6, chloroplastic</fullName>
    </alternativeName>
</protein>
<name>RR6_CYAM1</name>
<comment type="function">
    <text evidence="1">Binds together with bS18 to 16S ribosomal RNA.</text>
</comment>
<comment type="subcellular location">
    <subcellularLocation>
        <location>Plastid</location>
        <location>Chloroplast</location>
    </subcellularLocation>
</comment>
<comment type="similarity">
    <text evidence="1">Belongs to the bacterial ribosomal protein bS6 family.</text>
</comment>
<reference key="1">
    <citation type="journal article" date="2003" name="DNA Res.">
        <title>Complete sequence and analysis of the plastid genome of the unicellular red alga Cyanidioschyzon merolae.</title>
        <authorList>
            <person name="Ohta N."/>
            <person name="Matsuzaki M."/>
            <person name="Misumi O."/>
            <person name="Miyagishima S.-Y."/>
            <person name="Nozaki H."/>
            <person name="Tanaka K."/>
            <person name="Shin-i T."/>
            <person name="Kohara Y."/>
            <person name="Kuroiwa T."/>
        </authorList>
    </citation>
    <scope>NUCLEOTIDE SEQUENCE [LARGE SCALE GENOMIC DNA]</scope>
    <source>
        <strain>NIES-3377 / 10D</strain>
    </source>
</reference>
<keyword id="KW-0150">Chloroplast</keyword>
<keyword id="KW-0934">Plastid</keyword>
<keyword id="KW-1185">Reference proteome</keyword>
<keyword id="KW-0687">Ribonucleoprotein</keyword>
<keyword id="KW-0689">Ribosomal protein</keyword>
<keyword id="KW-0694">RNA-binding</keyword>
<keyword id="KW-0699">rRNA-binding</keyword>
<geneLocation type="chloroplast"/>
<feature type="chain" id="PRO_0000176886" description="Small ribosomal subunit protein bS6c">
    <location>
        <begin position="1"/>
        <end position="99"/>
    </location>
</feature>
<sequence>MKTQMKKPWIEYELMWLIRPDLNQEEIKKEIEAVMKVLEESRRVQLNGKTTRKLAYKIGKYEEGHYVQMEFDGYGRIVKKLEKYLQVNEKGLRYMILRK</sequence>
<evidence type="ECO:0000255" key="1">
    <source>
        <dbReference type="HAMAP-Rule" id="MF_00360"/>
    </source>
</evidence>
<evidence type="ECO:0000305" key="2"/>
<gene>
    <name evidence="1" type="primary">rps6</name>
</gene>